<reference key="1">
    <citation type="journal article" date="2010" name="Genome Biol. Evol.">
        <title>Continuing evolution of Burkholderia mallei through genome reduction and large-scale rearrangements.</title>
        <authorList>
            <person name="Losada L."/>
            <person name="Ronning C.M."/>
            <person name="DeShazer D."/>
            <person name="Woods D."/>
            <person name="Fedorova N."/>
            <person name="Kim H.S."/>
            <person name="Shabalina S.A."/>
            <person name="Pearson T.R."/>
            <person name="Brinkac L."/>
            <person name="Tan P."/>
            <person name="Nandi T."/>
            <person name="Crabtree J."/>
            <person name="Badger J."/>
            <person name="Beckstrom-Sternberg S."/>
            <person name="Saqib M."/>
            <person name="Schutzer S.E."/>
            <person name="Keim P."/>
            <person name="Nierman W.C."/>
        </authorList>
    </citation>
    <scope>NUCLEOTIDE SEQUENCE [LARGE SCALE GENOMIC DNA]</scope>
    <source>
        <strain>NCTC 10229</strain>
    </source>
</reference>
<keyword id="KW-0067">ATP-binding</keyword>
<keyword id="KW-0143">Chaperone</keyword>
<keyword id="KW-0963">Cytoplasm</keyword>
<keyword id="KW-0547">Nucleotide-binding</keyword>
<keyword id="KW-0346">Stress response</keyword>
<protein>
    <recommendedName>
        <fullName evidence="1">ATP-dependent protease ATPase subunit HslU</fullName>
    </recommendedName>
    <alternativeName>
        <fullName evidence="1">Unfoldase HslU</fullName>
    </alternativeName>
</protein>
<evidence type="ECO:0000255" key="1">
    <source>
        <dbReference type="HAMAP-Rule" id="MF_00249"/>
    </source>
</evidence>
<name>HSLU_BURM9</name>
<proteinExistence type="inferred from homology"/>
<accession>A2S869</accession>
<comment type="function">
    <text evidence="1">ATPase subunit of a proteasome-like degradation complex; this subunit has chaperone activity. The binding of ATP and its subsequent hydrolysis by HslU are essential for unfolding of protein substrates subsequently hydrolyzed by HslV. HslU recognizes the N-terminal part of its protein substrates and unfolds these before they are guided to HslV for hydrolysis.</text>
</comment>
<comment type="subunit">
    <text evidence="1">A double ring-shaped homohexamer of HslV is capped on each side by a ring-shaped HslU homohexamer. The assembly of the HslU/HslV complex is dependent on binding of ATP.</text>
</comment>
<comment type="subcellular location">
    <subcellularLocation>
        <location evidence="1">Cytoplasm</location>
    </subcellularLocation>
</comment>
<comment type="similarity">
    <text evidence="1">Belongs to the ClpX chaperone family. HslU subfamily.</text>
</comment>
<dbReference type="EMBL" id="CP000546">
    <property type="protein sequence ID" value="ABN03834.1"/>
    <property type="molecule type" value="Genomic_DNA"/>
</dbReference>
<dbReference type="RefSeq" id="WP_004198316.1">
    <property type="nucleotide sequence ID" value="NC_008836.1"/>
</dbReference>
<dbReference type="SMR" id="A2S869"/>
<dbReference type="GeneID" id="93058712"/>
<dbReference type="KEGG" id="bml:BMA10229_A2174"/>
<dbReference type="HOGENOM" id="CLU_033123_0_0_4"/>
<dbReference type="Proteomes" id="UP000002283">
    <property type="component" value="Chromosome I"/>
</dbReference>
<dbReference type="GO" id="GO:0009376">
    <property type="term" value="C:HslUV protease complex"/>
    <property type="evidence" value="ECO:0007669"/>
    <property type="project" value="UniProtKB-UniRule"/>
</dbReference>
<dbReference type="GO" id="GO:0005524">
    <property type="term" value="F:ATP binding"/>
    <property type="evidence" value="ECO:0007669"/>
    <property type="project" value="UniProtKB-UniRule"/>
</dbReference>
<dbReference type="GO" id="GO:0016887">
    <property type="term" value="F:ATP hydrolysis activity"/>
    <property type="evidence" value="ECO:0007669"/>
    <property type="project" value="InterPro"/>
</dbReference>
<dbReference type="GO" id="GO:0008233">
    <property type="term" value="F:peptidase activity"/>
    <property type="evidence" value="ECO:0007669"/>
    <property type="project" value="InterPro"/>
</dbReference>
<dbReference type="GO" id="GO:0036402">
    <property type="term" value="F:proteasome-activating activity"/>
    <property type="evidence" value="ECO:0007669"/>
    <property type="project" value="UniProtKB-UniRule"/>
</dbReference>
<dbReference type="GO" id="GO:0043335">
    <property type="term" value="P:protein unfolding"/>
    <property type="evidence" value="ECO:0007669"/>
    <property type="project" value="UniProtKB-UniRule"/>
</dbReference>
<dbReference type="GO" id="GO:0051603">
    <property type="term" value="P:proteolysis involved in protein catabolic process"/>
    <property type="evidence" value="ECO:0007669"/>
    <property type="project" value="TreeGrafter"/>
</dbReference>
<dbReference type="CDD" id="cd19498">
    <property type="entry name" value="RecA-like_HslU"/>
    <property type="match status" value="1"/>
</dbReference>
<dbReference type="FunFam" id="3.40.50.300:FF:000213">
    <property type="entry name" value="ATP-dependent protease ATPase subunit HslU"/>
    <property type="match status" value="1"/>
</dbReference>
<dbReference type="FunFam" id="3.40.50.300:FF:000220">
    <property type="entry name" value="ATP-dependent protease ATPase subunit HslU"/>
    <property type="match status" value="1"/>
</dbReference>
<dbReference type="Gene3D" id="1.10.8.60">
    <property type="match status" value="1"/>
</dbReference>
<dbReference type="Gene3D" id="1.10.8.10">
    <property type="entry name" value="DNA helicase RuvA subunit, C-terminal domain"/>
    <property type="match status" value="2"/>
</dbReference>
<dbReference type="Gene3D" id="3.40.50.300">
    <property type="entry name" value="P-loop containing nucleotide triphosphate hydrolases"/>
    <property type="match status" value="2"/>
</dbReference>
<dbReference type="HAMAP" id="MF_00249">
    <property type="entry name" value="HslU"/>
    <property type="match status" value="1"/>
</dbReference>
<dbReference type="InterPro" id="IPR003593">
    <property type="entry name" value="AAA+_ATPase"/>
</dbReference>
<dbReference type="InterPro" id="IPR050052">
    <property type="entry name" value="ATP-dep_Clp_protease_ClpX"/>
</dbReference>
<dbReference type="InterPro" id="IPR003959">
    <property type="entry name" value="ATPase_AAA_core"/>
</dbReference>
<dbReference type="InterPro" id="IPR019489">
    <property type="entry name" value="Clp_ATPase_C"/>
</dbReference>
<dbReference type="InterPro" id="IPR004491">
    <property type="entry name" value="HslU"/>
</dbReference>
<dbReference type="InterPro" id="IPR027417">
    <property type="entry name" value="P-loop_NTPase"/>
</dbReference>
<dbReference type="NCBIfam" id="TIGR00390">
    <property type="entry name" value="hslU"/>
    <property type="match status" value="1"/>
</dbReference>
<dbReference type="NCBIfam" id="NF003544">
    <property type="entry name" value="PRK05201.1"/>
    <property type="match status" value="1"/>
</dbReference>
<dbReference type="PANTHER" id="PTHR48102">
    <property type="entry name" value="ATP-DEPENDENT CLP PROTEASE ATP-BINDING SUBUNIT CLPX-LIKE, MITOCHONDRIAL-RELATED"/>
    <property type="match status" value="1"/>
</dbReference>
<dbReference type="PANTHER" id="PTHR48102:SF3">
    <property type="entry name" value="ATP-DEPENDENT PROTEASE ATPASE SUBUNIT HSLU"/>
    <property type="match status" value="1"/>
</dbReference>
<dbReference type="Pfam" id="PF00004">
    <property type="entry name" value="AAA"/>
    <property type="match status" value="1"/>
</dbReference>
<dbReference type="Pfam" id="PF07724">
    <property type="entry name" value="AAA_2"/>
    <property type="match status" value="1"/>
</dbReference>
<dbReference type="SMART" id="SM00382">
    <property type="entry name" value="AAA"/>
    <property type="match status" value="1"/>
</dbReference>
<dbReference type="SMART" id="SM01086">
    <property type="entry name" value="ClpB_D2-small"/>
    <property type="match status" value="1"/>
</dbReference>
<dbReference type="SUPFAM" id="SSF52540">
    <property type="entry name" value="P-loop containing nucleoside triphosphate hydrolases"/>
    <property type="match status" value="1"/>
</dbReference>
<gene>
    <name evidence="1" type="primary">hslU</name>
    <name type="ordered locus">BMA10229_A2174</name>
</gene>
<feature type="chain" id="PRO_1000012715" description="ATP-dependent protease ATPase subunit HslU">
    <location>
        <begin position="1"/>
        <end position="447"/>
    </location>
</feature>
<feature type="binding site" evidence="1">
    <location>
        <position position="18"/>
    </location>
    <ligand>
        <name>ATP</name>
        <dbReference type="ChEBI" id="CHEBI:30616"/>
    </ligand>
</feature>
<feature type="binding site" evidence="1">
    <location>
        <begin position="60"/>
        <end position="65"/>
    </location>
    <ligand>
        <name>ATP</name>
        <dbReference type="ChEBI" id="CHEBI:30616"/>
    </ligand>
</feature>
<feature type="binding site" evidence="1">
    <location>
        <position position="259"/>
    </location>
    <ligand>
        <name>ATP</name>
        <dbReference type="ChEBI" id="CHEBI:30616"/>
    </ligand>
</feature>
<feature type="binding site" evidence="1">
    <location>
        <position position="325"/>
    </location>
    <ligand>
        <name>ATP</name>
        <dbReference type="ChEBI" id="CHEBI:30616"/>
    </ligand>
</feature>
<feature type="binding site" evidence="1">
    <location>
        <position position="397"/>
    </location>
    <ligand>
        <name>ATP</name>
        <dbReference type="ChEBI" id="CHEBI:30616"/>
    </ligand>
</feature>
<organism>
    <name type="scientific">Burkholderia mallei (strain NCTC 10229)</name>
    <dbReference type="NCBI Taxonomy" id="412022"/>
    <lineage>
        <taxon>Bacteria</taxon>
        <taxon>Pseudomonadati</taxon>
        <taxon>Pseudomonadota</taxon>
        <taxon>Betaproteobacteria</taxon>
        <taxon>Burkholderiales</taxon>
        <taxon>Burkholderiaceae</taxon>
        <taxon>Burkholderia</taxon>
        <taxon>pseudomallei group</taxon>
    </lineage>
</organism>
<sequence length="447" mass="49757">MSTMTPAEIVSELDKHIIGQAKAKKAVAVALRNRWRRQQVAEPLRQEITPKNILMIGPTGVGKTEIARRLAKLADAPFIKIEATKFTEVGYVGRDVDSIVRDLIEISVKQTRETEMRKVRSKATDLAEDRILDVLLPQPRAVGFGASAEHANDDNNATRQTFRKRLREGQLDDKEIELDIEQPAVGMDIMAPPGMEEMTEQIRSMFSNLGSGKKQRRKVKIREALKLLTDEEAAKMLNDEEVKTKAVQNVEQNGIVFLDEIDKITSRNHEGGGGEVSRQGVQRDLLPLVEGTTINTKYGMVKTDHILFIASGAFHLAKPSDLIPELQGRFPIRVELDSLSVKDFEAILVATDASLVKQYQALLATEDVKLEFADDGIRRLAEIAYAVNEKTENIGARRLYTVIEKLLEEVSFAAGNHAGQSVTIDSAYVDRALGEVSKDEDLSRYVL</sequence>